<sequence length="51" mass="5978">MGQKWKLYIVKDGKVIRKNKFCPRCGPGVFMADHGDRWACGRCGYTEWKKK</sequence>
<reference key="1">
    <citation type="journal article" date="2003" name="Mol. Microbiol.">
        <title>An integrated analysis of the genome of the hyperthermophilic archaeon Pyrococcus abyssi.</title>
        <authorList>
            <person name="Cohen G.N."/>
            <person name="Barbe V."/>
            <person name="Flament D."/>
            <person name="Galperin M."/>
            <person name="Heilig R."/>
            <person name="Lecompte O."/>
            <person name="Poch O."/>
            <person name="Prieur D."/>
            <person name="Querellou J."/>
            <person name="Ripp R."/>
            <person name="Thierry J.-C."/>
            <person name="Van der Oost J."/>
            <person name="Weissenbach J."/>
            <person name="Zivanovic Y."/>
            <person name="Forterre P."/>
        </authorList>
    </citation>
    <scope>NUCLEOTIDE SEQUENCE [LARGE SCALE GENOMIC DNA]</scope>
    <source>
        <strain>GE5 / Orsay</strain>
    </source>
</reference>
<reference key="2">
    <citation type="journal article" date="2012" name="Curr. Microbiol.">
        <title>Re-annotation of two hyperthermophilic archaea Pyrococcus abyssi GE5 and Pyrococcus furiosus DSM 3638.</title>
        <authorList>
            <person name="Gao J."/>
            <person name="Wang J."/>
        </authorList>
    </citation>
    <scope>GENOME REANNOTATION</scope>
    <source>
        <strain>GE5 / Orsay</strain>
    </source>
</reference>
<evidence type="ECO:0000255" key="1">
    <source>
        <dbReference type="HAMAP-Rule" id="MF_00777"/>
    </source>
</evidence>
<evidence type="ECO:0000305" key="2"/>
<evidence type="ECO:0007829" key="3">
    <source>
        <dbReference type="PDB" id="6SWC"/>
    </source>
</evidence>
<evidence type="ECO:0007829" key="4">
    <source>
        <dbReference type="PDB" id="6SWE"/>
    </source>
</evidence>
<evidence type="ECO:0007829" key="5">
    <source>
        <dbReference type="PDB" id="7ZHG"/>
    </source>
</evidence>
<feature type="chain" id="PRO_0000137701" description="Small ribosomal subunit protein eS31">
    <location>
        <begin position="1"/>
        <end position="51"/>
    </location>
</feature>
<feature type="zinc finger region" description="C4-type" evidence="1">
    <location>
        <begin position="22"/>
        <end position="43"/>
    </location>
</feature>
<feature type="binding site" evidence="1">
    <location>
        <position position="22"/>
    </location>
    <ligand>
        <name>Zn(2+)</name>
        <dbReference type="ChEBI" id="CHEBI:29105"/>
    </ligand>
</feature>
<feature type="binding site" evidence="1">
    <location>
        <position position="25"/>
    </location>
    <ligand>
        <name>Zn(2+)</name>
        <dbReference type="ChEBI" id="CHEBI:29105"/>
    </ligand>
</feature>
<feature type="binding site" evidence="1">
    <location>
        <position position="40"/>
    </location>
    <ligand>
        <name>Zn(2+)</name>
        <dbReference type="ChEBI" id="CHEBI:29105"/>
    </ligand>
</feature>
<feature type="binding site" evidence="1">
    <location>
        <position position="43"/>
    </location>
    <ligand>
        <name>Zn(2+)</name>
        <dbReference type="ChEBI" id="CHEBI:29105"/>
    </ligand>
</feature>
<feature type="strand" evidence="4">
    <location>
        <begin position="8"/>
        <end position="10"/>
    </location>
</feature>
<feature type="strand" evidence="3">
    <location>
        <begin position="23"/>
        <end position="25"/>
    </location>
</feature>
<feature type="strand" evidence="5">
    <location>
        <begin position="35"/>
        <end position="37"/>
    </location>
</feature>
<feature type="strand" evidence="5">
    <location>
        <begin position="41"/>
        <end position="43"/>
    </location>
</feature>
<organism>
    <name type="scientific">Pyrococcus abyssi (strain GE5 / Orsay)</name>
    <dbReference type="NCBI Taxonomy" id="272844"/>
    <lineage>
        <taxon>Archaea</taxon>
        <taxon>Methanobacteriati</taxon>
        <taxon>Methanobacteriota</taxon>
        <taxon>Thermococci</taxon>
        <taxon>Thermococcales</taxon>
        <taxon>Thermococcaceae</taxon>
        <taxon>Pyrococcus</taxon>
    </lineage>
</organism>
<protein>
    <recommendedName>
        <fullName evidence="1">Small ribosomal subunit protein eS31</fullName>
    </recommendedName>
    <alternativeName>
        <fullName evidence="2">30S ribosomal protein S27ae</fullName>
    </alternativeName>
</protein>
<gene>
    <name evidence="1" type="primary">rps27ae</name>
    <name type="ordered locus">PYRAB16885</name>
    <name type="ORF">PAB3419a</name>
</gene>
<proteinExistence type="evidence at protein level"/>
<keyword id="KW-0002">3D-structure</keyword>
<keyword id="KW-0479">Metal-binding</keyword>
<keyword id="KW-0687">Ribonucleoprotein</keyword>
<keyword id="KW-0689">Ribosomal protein</keyword>
<keyword id="KW-0862">Zinc</keyword>
<keyword id="KW-0863">Zinc-finger</keyword>
<accession>P61238</accession>
<accession>G8ZK50</accession>
<comment type="cofactor">
    <cofactor evidence="1">
        <name>Zn(2+)</name>
        <dbReference type="ChEBI" id="CHEBI:29105"/>
    </cofactor>
    <text evidence="1">Binds 1 zinc ion per subunit.</text>
</comment>
<comment type="subunit">
    <text evidence="1">Part of the 30S ribosomal subunit.</text>
</comment>
<comment type="similarity">
    <text evidence="1">Belongs to the eukaryotic ribosomal protein eS31 family.</text>
</comment>
<name>RS27A_PYRAB</name>
<dbReference type="EMBL" id="AJ248288">
    <property type="status" value="NOT_ANNOTATED_CDS"/>
    <property type="molecule type" value="Genomic_DNA"/>
</dbReference>
<dbReference type="EMBL" id="HE613800">
    <property type="protein sequence ID" value="CCE71157.1"/>
    <property type="molecule type" value="Genomic_DNA"/>
</dbReference>
<dbReference type="RefSeq" id="WP_013748365.1">
    <property type="nucleotide sequence ID" value="NC_000868.1"/>
</dbReference>
<dbReference type="PDB" id="6SW9">
    <property type="method" value="EM"/>
    <property type="resolution" value="4.20 A"/>
    <property type="chains" value="Y=1-51"/>
</dbReference>
<dbReference type="PDB" id="6SWC">
    <property type="method" value="EM"/>
    <property type="resolution" value="3.30 A"/>
    <property type="chains" value="Y=1-51"/>
</dbReference>
<dbReference type="PDB" id="6SWE">
    <property type="method" value="EM"/>
    <property type="resolution" value="3.10 A"/>
    <property type="chains" value="Y=1-51"/>
</dbReference>
<dbReference type="PDB" id="7ZAG">
    <property type="method" value="EM"/>
    <property type="resolution" value="2.77 A"/>
    <property type="chains" value="Y=1-51"/>
</dbReference>
<dbReference type="PDB" id="7ZAH">
    <property type="method" value="EM"/>
    <property type="resolution" value="2.70 A"/>
    <property type="chains" value="Y=1-51"/>
</dbReference>
<dbReference type="PDB" id="7ZAI">
    <property type="method" value="EM"/>
    <property type="resolution" value="2.60 A"/>
    <property type="chains" value="Y=1-51"/>
</dbReference>
<dbReference type="PDB" id="7ZHG">
    <property type="method" value="EM"/>
    <property type="resolution" value="2.25 A"/>
    <property type="chains" value="Y=1-51"/>
</dbReference>
<dbReference type="PDBsum" id="6SW9"/>
<dbReference type="PDBsum" id="6SWC"/>
<dbReference type="PDBsum" id="6SWE"/>
<dbReference type="PDBsum" id="7ZAG"/>
<dbReference type="PDBsum" id="7ZAH"/>
<dbReference type="PDBsum" id="7ZAI"/>
<dbReference type="PDBsum" id="7ZHG"/>
<dbReference type="EMDB" id="EMD-10320"/>
<dbReference type="EMDB" id="EMD-10322"/>
<dbReference type="EMDB" id="EMD-10324"/>
<dbReference type="EMDB" id="EMD-14579"/>
<dbReference type="EMDB" id="EMD-14580"/>
<dbReference type="EMDB" id="EMD-14581"/>
<dbReference type="EMDB" id="EMD-14731"/>
<dbReference type="EMDB" id="EMD-8148"/>
<dbReference type="SMR" id="P61238"/>
<dbReference type="OrthoDB" id="25142at2157"/>
<dbReference type="Proteomes" id="UP000000810">
    <property type="component" value="Chromosome"/>
</dbReference>
<dbReference type="Proteomes" id="UP000009139">
    <property type="component" value="Chromosome"/>
</dbReference>
<dbReference type="GO" id="GO:1990904">
    <property type="term" value="C:ribonucleoprotein complex"/>
    <property type="evidence" value="ECO:0007669"/>
    <property type="project" value="UniProtKB-KW"/>
</dbReference>
<dbReference type="GO" id="GO:0005840">
    <property type="term" value="C:ribosome"/>
    <property type="evidence" value="ECO:0007669"/>
    <property type="project" value="UniProtKB-KW"/>
</dbReference>
<dbReference type="GO" id="GO:0003735">
    <property type="term" value="F:structural constituent of ribosome"/>
    <property type="evidence" value="ECO:0007669"/>
    <property type="project" value="InterPro"/>
</dbReference>
<dbReference type="GO" id="GO:0008270">
    <property type="term" value="F:zinc ion binding"/>
    <property type="evidence" value="ECO:0007669"/>
    <property type="project" value="UniProtKB-UniRule"/>
</dbReference>
<dbReference type="GO" id="GO:0006412">
    <property type="term" value="P:translation"/>
    <property type="evidence" value="ECO:0007669"/>
    <property type="project" value="UniProtKB-UniRule"/>
</dbReference>
<dbReference type="Gene3D" id="6.20.50.180">
    <property type="match status" value="1"/>
</dbReference>
<dbReference type="HAMAP" id="MF_00777">
    <property type="entry name" value="Ribosomal_eS31"/>
    <property type="match status" value="1"/>
</dbReference>
<dbReference type="InterPro" id="IPR002906">
    <property type="entry name" value="Ribosomal_eS31"/>
</dbReference>
<dbReference type="InterPro" id="IPR022845">
    <property type="entry name" value="Ribosomal_eS31_arc"/>
</dbReference>
<dbReference type="InterPro" id="IPR011332">
    <property type="entry name" value="Ribosomal_zn-bd"/>
</dbReference>
<dbReference type="NCBIfam" id="NF001669">
    <property type="entry name" value="PRK00432.1"/>
    <property type="match status" value="1"/>
</dbReference>
<dbReference type="Pfam" id="PF01599">
    <property type="entry name" value="Ribosomal_S27"/>
    <property type="match status" value="1"/>
</dbReference>
<dbReference type="SMART" id="SM01402">
    <property type="entry name" value="Ribosomal_S27"/>
    <property type="match status" value="1"/>
</dbReference>
<dbReference type="SUPFAM" id="SSF57829">
    <property type="entry name" value="Zn-binding ribosomal proteins"/>
    <property type="match status" value="1"/>
</dbReference>